<reference key="1">
    <citation type="submission" date="2006-12" db="EMBL/GenBank/DDBJ databases">
        <title>Complete sequence of Halorhodospira halophila SL1.</title>
        <authorList>
            <consortium name="US DOE Joint Genome Institute"/>
            <person name="Copeland A."/>
            <person name="Lucas S."/>
            <person name="Lapidus A."/>
            <person name="Barry K."/>
            <person name="Detter J.C."/>
            <person name="Glavina del Rio T."/>
            <person name="Hammon N."/>
            <person name="Israni S."/>
            <person name="Dalin E."/>
            <person name="Tice H."/>
            <person name="Pitluck S."/>
            <person name="Saunders E."/>
            <person name="Brettin T."/>
            <person name="Bruce D."/>
            <person name="Han C."/>
            <person name="Tapia R."/>
            <person name="Schmutz J."/>
            <person name="Larimer F."/>
            <person name="Land M."/>
            <person name="Hauser L."/>
            <person name="Kyrpides N."/>
            <person name="Mikhailova N."/>
            <person name="Hoff W."/>
            <person name="Richardson P."/>
        </authorList>
    </citation>
    <scope>NUCLEOTIDE SEQUENCE [LARGE SCALE GENOMIC DNA]</scope>
    <source>
        <strain>DSM 244 / SL1</strain>
    </source>
</reference>
<organism>
    <name type="scientific">Halorhodospira halophila (strain DSM 244 / SL1)</name>
    <name type="common">Ectothiorhodospira halophila (strain DSM 244 / SL1)</name>
    <dbReference type="NCBI Taxonomy" id="349124"/>
    <lineage>
        <taxon>Bacteria</taxon>
        <taxon>Pseudomonadati</taxon>
        <taxon>Pseudomonadota</taxon>
        <taxon>Gammaproteobacteria</taxon>
        <taxon>Chromatiales</taxon>
        <taxon>Ectothiorhodospiraceae</taxon>
        <taxon>Halorhodospira</taxon>
    </lineage>
</organism>
<gene>
    <name evidence="2" type="primary">trmB</name>
    <name type="ordered locus">Hhal_2398</name>
</gene>
<accession>A1WZP9</accession>
<feature type="chain" id="PRO_0000288156" description="tRNA (guanine-N(7)-)-methyltransferase">
    <location>
        <begin position="1"/>
        <end position="231"/>
    </location>
</feature>
<feature type="region of interest" description="Disordered" evidence="3">
    <location>
        <begin position="194"/>
        <end position="214"/>
    </location>
</feature>
<feature type="active site" evidence="1">
    <location>
        <position position="132"/>
    </location>
</feature>
<feature type="binding site" evidence="2">
    <location>
        <position position="57"/>
    </location>
    <ligand>
        <name>S-adenosyl-L-methionine</name>
        <dbReference type="ChEBI" id="CHEBI:59789"/>
    </ligand>
</feature>
<feature type="binding site" evidence="2">
    <location>
        <position position="82"/>
    </location>
    <ligand>
        <name>S-adenosyl-L-methionine</name>
        <dbReference type="ChEBI" id="CHEBI:59789"/>
    </ligand>
</feature>
<feature type="binding site" evidence="2">
    <location>
        <position position="109"/>
    </location>
    <ligand>
        <name>S-adenosyl-L-methionine</name>
        <dbReference type="ChEBI" id="CHEBI:59789"/>
    </ligand>
</feature>
<feature type="binding site" evidence="2">
    <location>
        <position position="132"/>
    </location>
    <ligand>
        <name>S-adenosyl-L-methionine</name>
        <dbReference type="ChEBI" id="CHEBI:59789"/>
    </ligand>
</feature>
<feature type="binding site" evidence="2">
    <location>
        <position position="136"/>
    </location>
    <ligand>
        <name>substrate</name>
    </ligand>
</feature>
<feature type="binding site" evidence="2">
    <location>
        <position position="168"/>
    </location>
    <ligand>
        <name>substrate</name>
    </ligand>
</feature>
<feature type="binding site" evidence="2">
    <location>
        <begin position="205"/>
        <end position="208"/>
    </location>
    <ligand>
        <name>substrate</name>
    </ligand>
</feature>
<sequence>MSQPRQTRTFVRREGRLTQGQQRALEGLWPQFGVDVPERGVIDLDGLFGRAAPRVLDIGFGDGEALVEMAAADPERDYLGVEVHRPGVGHCLLCAEQAGLDNLRVATVDAVELVRHHLPGPSLETVQIFFPDPWPKKRHHKRRIIQPAFLDLLAERLVPGGALHLATDWADYAEWMLDTLEADARFENTCGPRAFVPPPPPRPQTKFERRGLRKGHQVHDLIYRLRPDTAG</sequence>
<comment type="function">
    <text evidence="2">Catalyzes the formation of N(7)-methylguanine at position 46 (m7G46) in tRNA.</text>
</comment>
<comment type="catalytic activity">
    <reaction evidence="2">
        <text>guanosine(46) in tRNA + S-adenosyl-L-methionine = N(7)-methylguanosine(46) in tRNA + S-adenosyl-L-homocysteine</text>
        <dbReference type="Rhea" id="RHEA:42708"/>
        <dbReference type="Rhea" id="RHEA-COMP:10188"/>
        <dbReference type="Rhea" id="RHEA-COMP:10189"/>
        <dbReference type="ChEBI" id="CHEBI:57856"/>
        <dbReference type="ChEBI" id="CHEBI:59789"/>
        <dbReference type="ChEBI" id="CHEBI:74269"/>
        <dbReference type="ChEBI" id="CHEBI:74480"/>
        <dbReference type="EC" id="2.1.1.33"/>
    </reaction>
</comment>
<comment type="pathway">
    <text evidence="2">tRNA modification; N(7)-methylguanine-tRNA biosynthesis.</text>
</comment>
<comment type="similarity">
    <text evidence="2">Belongs to the class I-like SAM-binding methyltransferase superfamily. TrmB family.</text>
</comment>
<protein>
    <recommendedName>
        <fullName evidence="2">tRNA (guanine-N(7)-)-methyltransferase</fullName>
        <ecNumber evidence="2">2.1.1.33</ecNumber>
    </recommendedName>
    <alternativeName>
        <fullName evidence="2">tRNA (guanine(46)-N(7))-methyltransferase</fullName>
    </alternativeName>
    <alternativeName>
        <fullName evidence="2">tRNA(m7G46)-methyltransferase</fullName>
    </alternativeName>
</protein>
<keyword id="KW-0489">Methyltransferase</keyword>
<keyword id="KW-1185">Reference proteome</keyword>
<keyword id="KW-0949">S-adenosyl-L-methionine</keyword>
<keyword id="KW-0808">Transferase</keyword>
<keyword id="KW-0819">tRNA processing</keyword>
<name>TRMB_HALHL</name>
<evidence type="ECO:0000250" key="1"/>
<evidence type="ECO:0000255" key="2">
    <source>
        <dbReference type="HAMAP-Rule" id="MF_01057"/>
    </source>
</evidence>
<evidence type="ECO:0000256" key="3">
    <source>
        <dbReference type="SAM" id="MobiDB-lite"/>
    </source>
</evidence>
<dbReference type="EC" id="2.1.1.33" evidence="2"/>
<dbReference type="EMBL" id="CP000544">
    <property type="protein sequence ID" value="ABM63161.1"/>
    <property type="molecule type" value="Genomic_DNA"/>
</dbReference>
<dbReference type="RefSeq" id="WP_011815183.1">
    <property type="nucleotide sequence ID" value="NC_008789.1"/>
</dbReference>
<dbReference type="SMR" id="A1WZP9"/>
<dbReference type="STRING" id="349124.Hhal_2398"/>
<dbReference type="KEGG" id="hha:Hhal_2398"/>
<dbReference type="eggNOG" id="COG0220">
    <property type="taxonomic scope" value="Bacteria"/>
</dbReference>
<dbReference type="HOGENOM" id="CLU_050910_0_1_6"/>
<dbReference type="OrthoDB" id="9802090at2"/>
<dbReference type="UniPathway" id="UPA00989"/>
<dbReference type="Proteomes" id="UP000000647">
    <property type="component" value="Chromosome"/>
</dbReference>
<dbReference type="GO" id="GO:0043527">
    <property type="term" value="C:tRNA methyltransferase complex"/>
    <property type="evidence" value="ECO:0007669"/>
    <property type="project" value="TreeGrafter"/>
</dbReference>
<dbReference type="GO" id="GO:0008176">
    <property type="term" value="F:tRNA (guanine(46)-N7)-methyltransferase activity"/>
    <property type="evidence" value="ECO:0007669"/>
    <property type="project" value="UniProtKB-UniRule"/>
</dbReference>
<dbReference type="CDD" id="cd02440">
    <property type="entry name" value="AdoMet_MTases"/>
    <property type="match status" value="1"/>
</dbReference>
<dbReference type="Gene3D" id="3.40.50.150">
    <property type="entry name" value="Vaccinia Virus protein VP39"/>
    <property type="match status" value="1"/>
</dbReference>
<dbReference type="HAMAP" id="MF_01057">
    <property type="entry name" value="tRNA_methyltr_TrmB"/>
    <property type="match status" value="1"/>
</dbReference>
<dbReference type="InterPro" id="IPR029063">
    <property type="entry name" value="SAM-dependent_MTases_sf"/>
</dbReference>
<dbReference type="InterPro" id="IPR003358">
    <property type="entry name" value="tRNA_(Gua-N-7)_MeTrfase_Trmb"/>
</dbReference>
<dbReference type="InterPro" id="IPR055361">
    <property type="entry name" value="tRNA_methyltr_TrmB_bact"/>
</dbReference>
<dbReference type="NCBIfam" id="TIGR00091">
    <property type="entry name" value="tRNA (guanosine(46)-N7)-methyltransferase TrmB"/>
    <property type="match status" value="1"/>
</dbReference>
<dbReference type="PANTHER" id="PTHR23417">
    <property type="entry name" value="3-DEOXY-D-MANNO-OCTULOSONIC-ACID TRANSFERASE/TRNA GUANINE-N 7 - -METHYLTRANSFERASE"/>
    <property type="match status" value="1"/>
</dbReference>
<dbReference type="PANTHER" id="PTHR23417:SF14">
    <property type="entry name" value="PENTACOTRIPEPTIDE-REPEAT REGION OF PRORP DOMAIN-CONTAINING PROTEIN"/>
    <property type="match status" value="1"/>
</dbReference>
<dbReference type="Pfam" id="PF02390">
    <property type="entry name" value="Methyltransf_4"/>
    <property type="match status" value="1"/>
</dbReference>
<dbReference type="SUPFAM" id="SSF53335">
    <property type="entry name" value="S-adenosyl-L-methionine-dependent methyltransferases"/>
    <property type="match status" value="1"/>
</dbReference>
<dbReference type="PROSITE" id="PS51625">
    <property type="entry name" value="SAM_MT_TRMB"/>
    <property type="match status" value="1"/>
</dbReference>
<proteinExistence type="inferred from homology"/>